<dbReference type="EC" id="1.-.-.-" evidence="7"/>
<dbReference type="EMBL" id="HF679027">
    <property type="protein sequence ID" value="CCT69173.1"/>
    <property type="molecule type" value="Genomic_DNA"/>
</dbReference>
<dbReference type="SMR" id="S0E9M0"/>
<dbReference type="STRING" id="1279085.S0E9M0"/>
<dbReference type="EnsemblFungi" id="CCT69173">
    <property type="protein sequence ID" value="CCT69173"/>
    <property type="gene ID" value="FFUJ_14334"/>
</dbReference>
<dbReference type="VEuPathDB" id="FungiDB:FFUJ_14334"/>
<dbReference type="HOGENOM" id="CLU_022195_0_3_1"/>
<dbReference type="UniPathway" id="UPA00390"/>
<dbReference type="Proteomes" id="UP000016800">
    <property type="component" value="Chromosome 5"/>
</dbReference>
<dbReference type="GO" id="GO:0016020">
    <property type="term" value="C:membrane"/>
    <property type="evidence" value="ECO:0007669"/>
    <property type="project" value="UniProtKB-SubCell"/>
</dbReference>
<dbReference type="GO" id="GO:0020037">
    <property type="term" value="F:heme binding"/>
    <property type="evidence" value="ECO:0007669"/>
    <property type="project" value="InterPro"/>
</dbReference>
<dbReference type="GO" id="GO:0005506">
    <property type="term" value="F:iron ion binding"/>
    <property type="evidence" value="ECO:0007669"/>
    <property type="project" value="InterPro"/>
</dbReference>
<dbReference type="GO" id="GO:0004497">
    <property type="term" value="F:monooxygenase activity"/>
    <property type="evidence" value="ECO:0007669"/>
    <property type="project" value="UniProtKB-KW"/>
</dbReference>
<dbReference type="GO" id="GO:0016705">
    <property type="term" value="F:oxidoreductase activity, acting on paired donors, with incorporation or reduction of molecular oxygen"/>
    <property type="evidence" value="ECO:0007669"/>
    <property type="project" value="InterPro"/>
</dbReference>
<dbReference type="GO" id="GO:0009686">
    <property type="term" value="P:gibberellin biosynthetic process"/>
    <property type="evidence" value="ECO:0007669"/>
    <property type="project" value="UniProtKB-UniPathway"/>
</dbReference>
<dbReference type="GO" id="GO:0019748">
    <property type="term" value="P:secondary metabolic process"/>
    <property type="evidence" value="ECO:0007669"/>
    <property type="project" value="UniProtKB-ARBA"/>
</dbReference>
<dbReference type="CDD" id="cd11041">
    <property type="entry name" value="CYP503A1-like"/>
    <property type="match status" value="1"/>
</dbReference>
<dbReference type="Gene3D" id="1.10.630.10">
    <property type="entry name" value="Cytochrome P450"/>
    <property type="match status" value="1"/>
</dbReference>
<dbReference type="InterPro" id="IPR001128">
    <property type="entry name" value="Cyt_P450"/>
</dbReference>
<dbReference type="InterPro" id="IPR017972">
    <property type="entry name" value="Cyt_P450_CS"/>
</dbReference>
<dbReference type="InterPro" id="IPR002403">
    <property type="entry name" value="Cyt_P450_E_grp-IV"/>
</dbReference>
<dbReference type="InterPro" id="IPR036396">
    <property type="entry name" value="Cyt_P450_sf"/>
</dbReference>
<dbReference type="PANTHER" id="PTHR46206">
    <property type="entry name" value="CYTOCHROME P450"/>
    <property type="match status" value="1"/>
</dbReference>
<dbReference type="PANTHER" id="PTHR46206:SF2">
    <property type="entry name" value="CYTOCHROME P450 MONOOXYGENASE AUSG-RELATED"/>
    <property type="match status" value="1"/>
</dbReference>
<dbReference type="Pfam" id="PF00067">
    <property type="entry name" value="p450"/>
    <property type="match status" value="1"/>
</dbReference>
<dbReference type="PRINTS" id="PR00465">
    <property type="entry name" value="EP450IV"/>
</dbReference>
<dbReference type="SUPFAM" id="SSF48264">
    <property type="entry name" value="Cytochrome P450"/>
    <property type="match status" value="1"/>
</dbReference>
<dbReference type="PROSITE" id="PS00086">
    <property type="entry name" value="CYTOCHROME_P450"/>
    <property type="match status" value="1"/>
</dbReference>
<reference key="1">
    <citation type="journal article" date="2013" name="PLoS Pathog.">
        <title>Deciphering the cryptic genome: genome-wide analyses of the rice pathogen Fusarium fujikuroi reveal complex regulation of secondary metabolism and novel metabolites.</title>
        <authorList>
            <person name="Wiemann P."/>
            <person name="Sieber C.M.K."/>
            <person name="von Bargen K.W."/>
            <person name="Studt L."/>
            <person name="Niehaus E.-M."/>
            <person name="Espino J.J."/>
            <person name="Huss K."/>
            <person name="Michielse C.B."/>
            <person name="Albermann S."/>
            <person name="Wagner D."/>
            <person name="Bergner S.V."/>
            <person name="Connolly L.R."/>
            <person name="Fischer A."/>
            <person name="Reuter G."/>
            <person name="Kleigrewe K."/>
            <person name="Bald T."/>
            <person name="Wingfield B.D."/>
            <person name="Ophir R."/>
            <person name="Freeman S."/>
            <person name="Hippler M."/>
            <person name="Smith K.M."/>
            <person name="Brown D.W."/>
            <person name="Proctor R.H."/>
            <person name="Muensterkoetter M."/>
            <person name="Freitag M."/>
            <person name="Humpf H.-U."/>
            <person name="Gueldener U."/>
            <person name="Tudzynski B."/>
        </authorList>
    </citation>
    <scope>NUCLEOTIDE SEQUENCE [LARGE SCALE GENOMIC DNA]</scope>
    <scope>FUNCTION</scope>
    <source>
        <strain>CBS 195.34 / IMI 58289 / NRRL A-6831</strain>
    </source>
</reference>
<reference key="2">
    <citation type="journal article" date="1998" name="Curr. Genet.">
        <title>Gibberellin biosynthesis in Gibberella fujikuroi: cloning and characterization of the copalyl diphosphate synthase gene.</title>
        <authorList>
            <person name="Tudzynski B."/>
            <person name="Kawaide H."/>
            <person name="Kamiya Y."/>
        </authorList>
    </citation>
    <scope>FUNCTION</scope>
</reference>
<reference key="3">
    <citation type="journal article" date="1998" name="Fungal Genet. Biol.">
        <title>Gibberellin biosynthetic pathway in Gibberella fujikuroi: evidence for a gene cluster.</title>
        <authorList>
            <person name="Tudzynski B."/>
            <person name="Hoelter K."/>
        </authorList>
    </citation>
    <scope>FUNCTION</scope>
    <scope>INDUCTION</scope>
    <scope>DISRUPTION PHENOTYPE</scope>
    <scope>PATHWAY</scope>
</reference>
<reference key="4">
    <citation type="journal article" date="1999" name="Appl. Environ. Microbiol.">
        <title>Deletions in the gibberellin biosynthesis gene cluster of Gibberella fujikuroi by restriction enzyme-mediated integration and conventional transformation-mediated mutagenesis.</title>
        <authorList>
            <person name="Linnemannstoens P."/>
            <person name="Voss T."/>
            <person name="Hedden P."/>
            <person name="Gaskin P."/>
            <person name="Tudzynski B."/>
        </authorList>
    </citation>
    <scope>FUNCTION</scope>
</reference>
<reference key="5">
    <citation type="journal article" date="2000" name="Biosci. Biotechnol. Biochem.">
        <title>Cloning of a full-length cDNA encoding ent-kaurene synthase from Gibberella fujikuroi: functional analysis of a bifunctional diterpene cyclase.</title>
        <authorList>
            <person name="Toyomasu T."/>
            <person name="Kawaide H."/>
            <person name="Ishizaki A."/>
            <person name="Shinoda S."/>
            <person name="Otsuka M."/>
            <person name="Mitsuhashi W."/>
            <person name="Sassa T."/>
        </authorList>
    </citation>
    <scope>FUNCTION</scope>
</reference>
<reference key="6">
    <citation type="journal article" date="2001" name="Appl. Environ. Microbiol.">
        <title>The P450-4 gene of Gibberella fujikuroi encodes ent-kaurene oxidase in the gibberellin biosynthesis pathway.</title>
        <authorList>
            <person name="Tudzynski B."/>
            <person name="Hedden P."/>
            <person name="Carrera E."/>
            <person name="Gaskin P."/>
        </authorList>
    </citation>
    <scope>FUNCTION</scope>
</reference>
<reference key="7">
    <citation type="journal article" date="2001" name="Proc. Natl. Acad. Sci. U.S.A.">
        <title>The P450-1 gene of Gibberella fujikuroi encodes a multifunctional enzyme in gibberellin biosynthesis.</title>
        <authorList>
            <person name="Rojas M.C."/>
            <person name="Hedden P."/>
            <person name="Gaskin P."/>
            <person name="Tudzynski B."/>
        </authorList>
    </citation>
    <scope>FUNCTION</scope>
</reference>
<reference key="8">
    <citation type="journal article" date="2002" name="J. Biol. Chem.">
        <title>The gibberellin 20-oxidase of Gibberella fujikuroi is a multifunctional monooxygenase.</title>
        <authorList>
            <person name="Tudzynski B."/>
            <person name="Rojas M.C."/>
            <person name="Gaskin P."/>
            <person name="Hedden P."/>
        </authorList>
    </citation>
    <scope>FUNCTION</scope>
    <scope>DISRUPTION PHENOTYPE</scope>
    <scope>CATALYTIC ACTIVITY</scope>
    <scope>INDUCTION</scope>
    <scope>PATHWAY</scope>
</reference>
<reference key="9">
    <citation type="journal article" date="2003" name="J. Biol. Chem.">
        <title>Characterization of the final two genes of the gibberellin biosynthesis gene cluster of Gibberella fujikuroi: des and P450-3 encode GA4 desaturase and the 13-hydroxylase, respectively.</title>
        <authorList>
            <person name="Tudzynski B."/>
            <person name="Mihlan M."/>
            <person name="Rojas M.C."/>
            <person name="Linnemannstons P."/>
            <person name="Gaskin P."/>
            <person name="Hedden P."/>
        </authorList>
    </citation>
    <scope>FUNCTION</scope>
</reference>
<reference key="10">
    <citation type="journal article" date="2005" name="Phytochemistry">
        <title>Distribution of gibberellin biosynthetic genes and gibberellin production in the Gibberella fujikuroi species complex.</title>
        <authorList>
            <person name="Malonek S."/>
            <person name="Boemke C."/>
            <person name="Bornberg-Bauer E."/>
            <person name="Rojas M.C."/>
            <person name="Hedden P."/>
            <person name="Hopkins P."/>
            <person name="Tudzynski B."/>
        </authorList>
    </citation>
    <scope>FUNCTION</scope>
</reference>
<feature type="chain" id="PRO_0000442043" description="Cytochrome P450 monooygenase 2">
    <location>
        <begin position="1"/>
        <end position="481"/>
    </location>
</feature>
<feature type="transmembrane region" description="Helical" evidence="2">
    <location>
        <begin position="12"/>
        <end position="32"/>
    </location>
</feature>
<feature type="binding site" description="axial binding residue" evidence="1">
    <location>
        <position position="418"/>
    </location>
    <ligand>
        <name>heme</name>
        <dbReference type="ChEBI" id="CHEBI:30413"/>
    </ligand>
    <ligandPart>
        <name>Fe</name>
        <dbReference type="ChEBI" id="CHEBI:18248"/>
    </ligandPart>
</feature>
<evidence type="ECO:0000250" key="1">
    <source>
        <dbReference type="UniProtKB" id="P04798"/>
    </source>
</evidence>
<evidence type="ECO:0000255" key="2"/>
<evidence type="ECO:0000269" key="3">
    <source>
    </source>
</evidence>
<evidence type="ECO:0000269" key="4">
    <source>
    </source>
</evidence>
<evidence type="ECO:0000269" key="5">
    <source>
    </source>
</evidence>
<evidence type="ECO:0000269" key="6">
    <source>
    </source>
</evidence>
<evidence type="ECO:0000269" key="7">
    <source>
    </source>
</evidence>
<evidence type="ECO:0000269" key="8">
    <source>
    </source>
</evidence>
<evidence type="ECO:0000269" key="9">
    <source>
    </source>
</evidence>
<evidence type="ECO:0000269" key="10">
    <source>
    </source>
</evidence>
<evidence type="ECO:0000269" key="11">
    <source>
    </source>
</evidence>
<evidence type="ECO:0000269" key="12">
    <source>
    </source>
</evidence>
<evidence type="ECO:0000303" key="13">
    <source>
    </source>
</evidence>
<evidence type="ECO:0000303" key="14">
    <source>
    </source>
</evidence>
<evidence type="ECO:0000305" key="15"/>
<protein>
    <recommendedName>
        <fullName evidence="14">Cytochrome P450 monooygenase 2</fullName>
        <shortName evidence="14">P450-2</shortName>
        <ecNumber evidence="7">1.-.-.-</ecNumber>
    </recommendedName>
    <alternativeName>
        <fullName evidence="13">Gibberellin 20-oxidase</fullName>
    </alternativeName>
</protein>
<name>GA4_GIBF5</name>
<proteinExistence type="evidence at protein level"/>
<sequence length="481" mass="55092">MSIFNMITSYAGSQLLPFYIAIFVFTLVPWAIRFSWLELRKGSVVPLANPPDSLFGTGKTRRSFVKLSREILAKARSLFPNEPFRLITDWDFADEIRNDPRLSFSKAAMQDNHAGIPGFETVALVGREDQLIQKVARKQLTKHLYIIARISSRIYLGDQLCRNEAWLKITKTYTTNFYTASTNLRMFPRSIRPLAHWFLPECRKLRQERKDAIGIITPLIERRRELRRAAIAAGQPLPVFHDAIDWSEQEAEAAGTGASFDPVIFQLTLSLLAIHTTYDLLQQTMIDLGRHPEYIEPLRQEVVQLLREEGWKKTTLFKMKLLDSAIKESQRMKPGSIVTMRRYVTEDITLSSGLTLKKGTRLNVDNRRLDDPKIYDNPEVYNPYRFYDMRSEAGKDHGAQLVSTGSNHMGFGHGQHSCPGRFFAANEIKVALCHILVKYDWKLCPDTETKPDTRGMIAKSSPVTDILIKRRESVELDLEAI</sequence>
<comment type="function">
    <text evidence="3 4 5 6 7 8 9 10 11 12">Gibberellin 20-oxidase; part of the gene cluster that mediates the biosynthesis of gibberellins (GAs), diterpenoids that may provide a selective advantage during infection of the preferred host plant, rice (PubMed:10347043, PubMed:12750377, PubMed:15925394, PubMed:23825955, PubMed:9917370). Gibberellins (GAs) are diterpenoids and are synthesized via the mevalonate pathway (PubMed:12750377). Biosynthesis of the major metabolite GA3 (gibberellic acid) from geranylgeranyl diphosphate (GGPP) requires 13 steps (PubMed:12750377). The GGPP produced by the geranylgeranyl diphosphate synthase GGS2 is converted to ent-kaurene via ent-copalyldiphosphate in a two-step cyclization reaction performed by the bifunctional ent-copalyl diphosphate synthase/ent-kaurene synthase enzyme (CPS/KS) (PubMed:10803977, PubMed:12750377, PubMed:9745028). Ent-Kaurene is metabolized to GAs by a series of oxidation reactions catalyzed by cytochrome P450 monooxygenases (PubMed:12750377, PubMed:9917370). Cytochrome P450 monooxygenase P450-4 is an ent-kaurene oxidase that catalyzes the three oxidation steps between ent-kaurene and ent-kaurenoic acid (PubMed:11472927). The highly multifunctional cytochrome P450 monooxygenase P450-1 then catalyzes four steps involving oxidation at two carbon atoms, in the main pathway from ent-kaurenoic acid to GA14 via GA12-aldehyde as well as producing kaurenolides and fujenoic acids as by-products (PubMed:11320210). The cytochrome P450 monooxygenase P450-2 then converts GA14 to GA4 by removal of C-20 (PubMed:11943776). GA4 is further converted to GA7 by the GA4 desaturase DES via 1,2-desaturation before cytochrome P450 monooxygenase P450-3, a 13-hydroxylase, hydroxylates GA7 to GA3, the final product of the GA-biosynthetic pathway (PubMed:12750377).</text>
</comment>
<comment type="cofactor">
    <cofactor evidence="1">
        <name>heme</name>
        <dbReference type="ChEBI" id="CHEBI:30413"/>
    </cofactor>
</comment>
<comment type="pathway">
    <text evidence="7 12">Plant hormone biosynthesis; gibberellin biosynthesis.</text>
</comment>
<comment type="subcellular location">
    <subcellularLocation>
        <location evidence="2">Membrane</location>
        <topology evidence="2">Single-pass membrane protein</topology>
    </subcellularLocation>
</comment>
<comment type="induction">
    <text evidence="7 12">Expression is induced under gibberellin-producing conditions (PubMed:9917370). Expression is repressed by high amounts of nitrogen but is not affected by the presence of biosynthetically advanced GAs (PubMed:11943776).</text>
</comment>
<comment type="disruption phenotype">
    <text evidence="7 12">Leads to the loss of gibberellins production (PubMed:9917370). Accumulates GA14 but later intermediates of the pathway are not detected (PubMed:11943776).</text>
</comment>
<comment type="similarity">
    <text evidence="15">Belongs to the cytochrome P450 family.</text>
</comment>
<keyword id="KW-0349">Heme</keyword>
<keyword id="KW-0408">Iron</keyword>
<keyword id="KW-0472">Membrane</keyword>
<keyword id="KW-0479">Metal-binding</keyword>
<keyword id="KW-0503">Monooxygenase</keyword>
<keyword id="KW-0560">Oxidoreductase</keyword>
<keyword id="KW-1185">Reference proteome</keyword>
<keyword id="KW-0812">Transmembrane</keyword>
<keyword id="KW-1133">Transmembrane helix</keyword>
<gene>
    <name evidence="14" type="primary">P450-2</name>
    <name type="ORF">FFUJ_14334</name>
</gene>
<organism>
    <name type="scientific">Gibberella fujikuroi (strain CBS 195.34 / IMI 58289 / NRRL A-6831)</name>
    <name type="common">Bakanae and foot rot disease fungus</name>
    <name type="synonym">Fusarium fujikuroi</name>
    <dbReference type="NCBI Taxonomy" id="1279085"/>
    <lineage>
        <taxon>Eukaryota</taxon>
        <taxon>Fungi</taxon>
        <taxon>Dikarya</taxon>
        <taxon>Ascomycota</taxon>
        <taxon>Pezizomycotina</taxon>
        <taxon>Sordariomycetes</taxon>
        <taxon>Hypocreomycetidae</taxon>
        <taxon>Hypocreales</taxon>
        <taxon>Nectriaceae</taxon>
        <taxon>Fusarium</taxon>
        <taxon>Fusarium fujikuroi species complex</taxon>
    </lineage>
</organism>
<accession>S0E9M0</accession>